<organism>
    <name type="scientific">Penicillium rubens (strain ATCC 28089 / DSM 1075 / NRRL 1951 / Wisconsin 54-1255)</name>
    <name type="common">Penicillium chrysogenum</name>
    <dbReference type="NCBI Taxonomy" id="500485"/>
    <lineage>
        <taxon>Eukaryota</taxon>
        <taxon>Fungi</taxon>
        <taxon>Dikarya</taxon>
        <taxon>Ascomycota</taxon>
        <taxon>Pezizomycotina</taxon>
        <taxon>Eurotiomycetes</taxon>
        <taxon>Eurotiomycetidae</taxon>
        <taxon>Eurotiales</taxon>
        <taxon>Aspergillaceae</taxon>
        <taxon>Penicillium</taxon>
        <taxon>Penicillium chrysogenum species complex</taxon>
    </lineage>
</organism>
<feature type="chain" id="PRO_0000443834" description="Highly reducing polyketide synthase sorA">
    <location>
        <begin position="1"/>
        <end position="2581"/>
    </location>
</feature>
<feature type="domain" description="Ketosynthase family 3 (KS3)" evidence="4 12">
    <location>
        <begin position="14"/>
        <end position="436"/>
    </location>
</feature>
<feature type="domain" description="PKS/mFAS DH" evidence="5">
    <location>
        <begin position="966"/>
        <end position="1273"/>
    </location>
</feature>
<feature type="domain" description="Carrier" evidence="3 12">
    <location>
        <begin position="2497"/>
        <end position="2574"/>
    </location>
</feature>
<feature type="region of interest" description="Malonyl-CoA:ACP transacylase (MAT) domain" evidence="2 12">
    <location>
        <begin position="574"/>
        <end position="868"/>
    </location>
</feature>
<feature type="region of interest" description="Dehydratase (DH) domain" evidence="2 12">
    <location>
        <begin position="966"/>
        <end position="1270"/>
    </location>
</feature>
<feature type="region of interest" description="N-terminal hotdog fold" evidence="5">
    <location>
        <begin position="966"/>
        <end position="1103"/>
    </location>
</feature>
<feature type="region of interest" description="C-terminal hotdog fold" evidence="5">
    <location>
        <begin position="1119"/>
        <end position="1273"/>
    </location>
</feature>
<feature type="region of interest" description="Methyltransferase (CMet) domain" evidence="2 12">
    <location>
        <begin position="1461"/>
        <end position="1568"/>
    </location>
</feature>
<feature type="region of interest" description="Enoyl reductase (ER)domain" evidence="2 12">
    <location>
        <begin position="1873"/>
        <end position="2184"/>
    </location>
</feature>
<feature type="region of interest" description="Ketoreductase (KR) domain" evidence="2 12">
    <location>
        <begin position="2207"/>
        <end position="2389"/>
    </location>
</feature>
<feature type="active site" description="For beta-ketoacyl synthase activity" evidence="4">
    <location>
        <position position="187"/>
    </location>
</feature>
<feature type="active site" description="For beta-ketoacyl synthase activity" evidence="4">
    <location>
        <position position="322"/>
    </location>
</feature>
<feature type="active site" description="For beta-ketoacyl synthase activity" evidence="4">
    <location>
        <position position="359"/>
    </location>
</feature>
<feature type="active site" description="Proton acceptor; for dehydratase activity" evidence="5">
    <location>
        <position position="998"/>
    </location>
</feature>
<feature type="active site" description="Proton donor; for dehydratase activity" evidence="5">
    <location>
        <position position="1184"/>
    </location>
</feature>
<feature type="modified residue" description="O-(pantetheine 4'-phosphoryl)serine" evidence="3">
    <location>
        <position position="2534"/>
    </location>
</feature>
<dbReference type="EC" id="2.3.1.-" evidence="6"/>
<dbReference type="EMBL" id="AM920436">
    <property type="protein sequence ID" value="CAP95405.1"/>
    <property type="molecule type" value="Genomic_DNA"/>
</dbReference>
<dbReference type="RefSeq" id="XP_002567554.1">
    <property type="nucleotide sequence ID" value="XM_002567508.1"/>
</dbReference>
<dbReference type="SMR" id="B6HNK3"/>
<dbReference type="STRING" id="500485.B6HNK3"/>
<dbReference type="GeneID" id="8313805"/>
<dbReference type="KEGG" id="pcs:N7525_006989"/>
<dbReference type="VEuPathDB" id="FungiDB:PCH_Pc21g05080"/>
<dbReference type="eggNOG" id="KOG1202">
    <property type="taxonomic scope" value="Eukaryota"/>
</dbReference>
<dbReference type="HOGENOM" id="CLU_000022_31_0_1"/>
<dbReference type="OMA" id="STPICVA"/>
<dbReference type="OrthoDB" id="329835at2759"/>
<dbReference type="BioCyc" id="PCHR:PC21G05080-MONOMER"/>
<dbReference type="Proteomes" id="UP000000724">
    <property type="component" value="Contig Pc00c21"/>
</dbReference>
<dbReference type="GO" id="GO:0004312">
    <property type="term" value="F:fatty acid synthase activity"/>
    <property type="evidence" value="ECO:0007669"/>
    <property type="project" value="TreeGrafter"/>
</dbReference>
<dbReference type="GO" id="GO:0008168">
    <property type="term" value="F:methyltransferase activity"/>
    <property type="evidence" value="ECO:0007669"/>
    <property type="project" value="UniProtKB-KW"/>
</dbReference>
<dbReference type="GO" id="GO:0016491">
    <property type="term" value="F:oxidoreductase activity"/>
    <property type="evidence" value="ECO:0007669"/>
    <property type="project" value="UniProtKB-KW"/>
</dbReference>
<dbReference type="GO" id="GO:0031177">
    <property type="term" value="F:phosphopantetheine binding"/>
    <property type="evidence" value="ECO:0007669"/>
    <property type="project" value="InterPro"/>
</dbReference>
<dbReference type="GO" id="GO:0006633">
    <property type="term" value="P:fatty acid biosynthetic process"/>
    <property type="evidence" value="ECO:0007669"/>
    <property type="project" value="TreeGrafter"/>
</dbReference>
<dbReference type="GO" id="GO:1901336">
    <property type="term" value="P:lactone biosynthetic process"/>
    <property type="evidence" value="ECO:0007669"/>
    <property type="project" value="UniProtKB-ARBA"/>
</dbReference>
<dbReference type="GO" id="GO:0032259">
    <property type="term" value="P:methylation"/>
    <property type="evidence" value="ECO:0007669"/>
    <property type="project" value="UniProtKB-KW"/>
</dbReference>
<dbReference type="GO" id="GO:0030639">
    <property type="term" value="P:polyketide biosynthetic process"/>
    <property type="evidence" value="ECO:0007669"/>
    <property type="project" value="UniProtKB-ARBA"/>
</dbReference>
<dbReference type="CDD" id="cd02440">
    <property type="entry name" value="AdoMet_MTases"/>
    <property type="match status" value="1"/>
</dbReference>
<dbReference type="CDD" id="cd05195">
    <property type="entry name" value="enoyl_red"/>
    <property type="match status" value="1"/>
</dbReference>
<dbReference type="CDD" id="cd00833">
    <property type="entry name" value="PKS"/>
    <property type="match status" value="1"/>
</dbReference>
<dbReference type="FunFam" id="3.40.366.10:FF:000002">
    <property type="entry name" value="Probable polyketide synthase 2"/>
    <property type="match status" value="1"/>
</dbReference>
<dbReference type="Gene3D" id="3.30.70.3290">
    <property type="match status" value="1"/>
</dbReference>
<dbReference type="Gene3D" id="3.40.47.10">
    <property type="match status" value="1"/>
</dbReference>
<dbReference type="Gene3D" id="1.10.1200.10">
    <property type="entry name" value="ACP-like"/>
    <property type="match status" value="1"/>
</dbReference>
<dbReference type="Gene3D" id="3.40.366.10">
    <property type="entry name" value="Malonyl-Coenzyme A Acyl Carrier Protein, domain 2"/>
    <property type="match status" value="1"/>
</dbReference>
<dbReference type="Gene3D" id="3.90.180.10">
    <property type="entry name" value="Medium-chain alcohol dehydrogenases, catalytic domain"/>
    <property type="match status" value="1"/>
</dbReference>
<dbReference type="Gene3D" id="3.40.50.720">
    <property type="entry name" value="NAD(P)-binding Rossmann-like Domain"/>
    <property type="match status" value="1"/>
</dbReference>
<dbReference type="Gene3D" id="3.10.129.110">
    <property type="entry name" value="Polyketide synthase dehydratase"/>
    <property type="match status" value="1"/>
</dbReference>
<dbReference type="Gene3D" id="3.40.50.150">
    <property type="entry name" value="Vaccinia Virus protein VP39"/>
    <property type="match status" value="1"/>
</dbReference>
<dbReference type="InterPro" id="IPR001227">
    <property type="entry name" value="Ac_transferase_dom_sf"/>
</dbReference>
<dbReference type="InterPro" id="IPR036736">
    <property type="entry name" value="ACP-like_sf"/>
</dbReference>
<dbReference type="InterPro" id="IPR014043">
    <property type="entry name" value="Acyl_transferase_dom"/>
</dbReference>
<dbReference type="InterPro" id="IPR016035">
    <property type="entry name" value="Acyl_Trfase/lysoPLipase"/>
</dbReference>
<dbReference type="InterPro" id="IPR011032">
    <property type="entry name" value="GroES-like_sf"/>
</dbReference>
<dbReference type="InterPro" id="IPR014031">
    <property type="entry name" value="Ketoacyl_synth_C"/>
</dbReference>
<dbReference type="InterPro" id="IPR014030">
    <property type="entry name" value="Ketoacyl_synth_N"/>
</dbReference>
<dbReference type="InterPro" id="IPR016036">
    <property type="entry name" value="Malonyl_transacylase_ACP-bd"/>
</dbReference>
<dbReference type="InterPro" id="IPR013217">
    <property type="entry name" value="Methyltransf_12"/>
</dbReference>
<dbReference type="InterPro" id="IPR036291">
    <property type="entry name" value="NAD(P)-bd_dom_sf"/>
</dbReference>
<dbReference type="InterPro" id="IPR056501">
    <property type="entry name" value="NAD-bd_HRPKS_sdrA"/>
</dbReference>
<dbReference type="InterPro" id="IPR032821">
    <property type="entry name" value="PKS_assoc"/>
</dbReference>
<dbReference type="InterPro" id="IPR020841">
    <property type="entry name" value="PKS_Beta-ketoAc_synthase_dom"/>
</dbReference>
<dbReference type="InterPro" id="IPR042104">
    <property type="entry name" value="PKS_dehydratase_sf"/>
</dbReference>
<dbReference type="InterPro" id="IPR020807">
    <property type="entry name" value="PKS_DH"/>
</dbReference>
<dbReference type="InterPro" id="IPR049551">
    <property type="entry name" value="PKS_DH_C"/>
</dbReference>
<dbReference type="InterPro" id="IPR049552">
    <property type="entry name" value="PKS_DH_N"/>
</dbReference>
<dbReference type="InterPro" id="IPR020843">
    <property type="entry name" value="PKS_ER"/>
</dbReference>
<dbReference type="InterPro" id="IPR013968">
    <property type="entry name" value="PKS_KR"/>
</dbReference>
<dbReference type="InterPro" id="IPR049900">
    <property type="entry name" value="PKS_mFAS_DH"/>
</dbReference>
<dbReference type="InterPro" id="IPR050091">
    <property type="entry name" value="PKS_NRPS_Biosynth_Enz"/>
</dbReference>
<dbReference type="InterPro" id="IPR020806">
    <property type="entry name" value="PKS_PP-bd"/>
</dbReference>
<dbReference type="InterPro" id="IPR009081">
    <property type="entry name" value="PP-bd_ACP"/>
</dbReference>
<dbReference type="InterPro" id="IPR029063">
    <property type="entry name" value="SAM-dependent_MTases_sf"/>
</dbReference>
<dbReference type="InterPro" id="IPR016039">
    <property type="entry name" value="Thiolase-like"/>
</dbReference>
<dbReference type="PANTHER" id="PTHR43775:SF29">
    <property type="entry name" value="ASPERFURANONE POLYKETIDE SYNTHASE AFOG-RELATED"/>
    <property type="match status" value="1"/>
</dbReference>
<dbReference type="PANTHER" id="PTHR43775">
    <property type="entry name" value="FATTY ACID SYNTHASE"/>
    <property type="match status" value="1"/>
</dbReference>
<dbReference type="Pfam" id="PF00698">
    <property type="entry name" value="Acyl_transf_1"/>
    <property type="match status" value="1"/>
</dbReference>
<dbReference type="Pfam" id="PF13602">
    <property type="entry name" value="ADH_zinc_N_2"/>
    <property type="match status" value="1"/>
</dbReference>
<dbReference type="Pfam" id="PF16197">
    <property type="entry name" value="KAsynt_C_assoc"/>
    <property type="match status" value="1"/>
</dbReference>
<dbReference type="Pfam" id="PF00109">
    <property type="entry name" value="ketoacyl-synt"/>
    <property type="match status" value="1"/>
</dbReference>
<dbReference type="Pfam" id="PF02801">
    <property type="entry name" value="Ketoacyl-synt_C"/>
    <property type="match status" value="1"/>
</dbReference>
<dbReference type="Pfam" id="PF08659">
    <property type="entry name" value="KR"/>
    <property type="match status" value="1"/>
</dbReference>
<dbReference type="Pfam" id="PF08242">
    <property type="entry name" value="Methyltransf_12"/>
    <property type="match status" value="1"/>
</dbReference>
<dbReference type="Pfam" id="PF23114">
    <property type="entry name" value="NAD-bd_HRPKS_sdrA"/>
    <property type="match status" value="1"/>
</dbReference>
<dbReference type="Pfam" id="PF21089">
    <property type="entry name" value="PKS_DH_N"/>
    <property type="match status" value="1"/>
</dbReference>
<dbReference type="Pfam" id="PF14765">
    <property type="entry name" value="PS-DH"/>
    <property type="match status" value="1"/>
</dbReference>
<dbReference type="SMART" id="SM00827">
    <property type="entry name" value="PKS_AT"/>
    <property type="match status" value="1"/>
</dbReference>
<dbReference type="SMART" id="SM00826">
    <property type="entry name" value="PKS_DH"/>
    <property type="match status" value="1"/>
</dbReference>
<dbReference type="SMART" id="SM00829">
    <property type="entry name" value="PKS_ER"/>
    <property type="match status" value="1"/>
</dbReference>
<dbReference type="SMART" id="SM00822">
    <property type="entry name" value="PKS_KR"/>
    <property type="match status" value="1"/>
</dbReference>
<dbReference type="SMART" id="SM00825">
    <property type="entry name" value="PKS_KS"/>
    <property type="match status" value="1"/>
</dbReference>
<dbReference type="SMART" id="SM00823">
    <property type="entry name" value="PKS_PP"/>
    <property type="match status" value="1"/>
</dbReference>
<dbReference type="SUPFAM" id="SSF47336">
    <property type="entry name" value="ACP-like"/>
    <property type="match status" value="1"/>
</dbReference>
<dbReference type="SUPFAM" id="SSF52151">
    <property type="entry name" value="FabD/lysophospholipase-like"/>
    <property type="match status" value="1"/>
</dbReference>
<dbReference type="SUPFAM" id="SSF50129">
    <property type="entry name" value="GroES-like"/>
    <property type="match status" value="1"/>
</dbReference>
<dbReference type="SUPFAM" id="SSF51735">
    <property type="entry name" value="NAD(P)-binding Rossmann-fold domains"/>
    <property type="match status" value="2"/>
</dbReference>
<dbReference type="SUPFAM" id="SSF55048">
    <property type="entry name" value="Probable ACP-binding domain of malonyl-CoA ACP transacylase"/>
    <property type="match status" value="1"/>
</dbReference>
<dbReference type="SUPFAM" id="SSF53335">
    <property type="entry name" value="S-adenosyl-L-methionine-dependent methyltransferases"/>
    <property type="match status" value="1"/>
</dbReference>
<dbReference type="SUPFAM" id="SSF53901">
    <property type="entry name" value="Thiolase-like"/>
    <property type="match status" value="1"/>
</dbReference>
<dbReference type="PROSITE" id="PS50075">
    <property type="entry name" value="CARRIER"/>
    <property type="match status" value="1"/>
</dbReference>
<dbReference type="PROSITE" id="PS52004">
    <property type="entry name" value="KS3_2"/>
    <property type="match status" value="1"/>
</dbReference>
<dbReference type="PROSITE" id="PS52019">
    <property type="entry name" value="PKS_MFAS_DH"/>
    <property type="match status" value="1"/>
</dbReference>
<evidence type="ECO:0000250" key="1">
    <source>
        <dbReference type="UniProtKB" id="G0R6S8"/>
    </source>
</evidence>
<evidence type="ECO:0000255" key="2"/>
<evidence type="ECO:0000255" key="3">
    <source>
        <dbReference type="PROSITE-ProRule" id="PRU00258"/>
    </source>
</evidence>
<evidence type="ECO:0000255" key="4">
    <source>
        <dbReference type="PROSITE-ProRule" id="PRU01348"/>
    </source>
</evidence>
<evidence type="ECO:0000255" key="5">
    <source>
        <dbReference type="PROSITE-ProRule" id="PRU01363"/>
    </source>
</evidence>
<evidence type="ECO:0000269" key="6">
    <source>
    </source>
</evidence>
<evidence type="ECO:0000269" key="7">
    <source>
    </source>
</evidence>
<evidence type="ECO:0000269" key="8">
    <source>
    </source>
</evidence>
<evidence type="ECO:0000303" key="9">
    <source>
    </source>
</evidence>
<evidence type="ECO:0000303" key="10">
    <source>
    </source>
</evidence>
<evidence type="ECO:0000305" key="11"/>
<evidence type="ECO:0000305" key="12">
    <source>
    </source>
</evidence>
<reference key="1">
    <citation type="journal article" date="2008" name="Nat. Biotechnol.">
        <title>Genome sequencing and analysis of the filamentous fungus Penicillium chrysogenum.</title>
        <authorList>
            <person name="van den Berg M.A."/>
            <person name="Albang R."/>
            <person name="Albermann K."/>
            <person name="Badger J.H."/>
            <person name="Daran J.-M."/>
            <person name="Driessen A.J.M."/>
            <person name="Garcia-Estrada C."/>
            <person name="Fedorova N.D."/>
            <person name="Harris D.M."/>
            <person name="Heijne W.H.M."/>
            <person name="Joardar V.S."/>
            <person name="Kiel J.A.K.W."/>
            <person name="Kovalchuk A."/>
            <person name="Martin J.F."/>
            <person name="Nierman W.C."/>
            <person name="Nijland J.G."/>
            <person name="Pronk J.T."/>
            <person name="Roubos J.A."/>
            <person name="van der Klei I.J."/>
            <person name="van Peij N.N.M.E."/>
            <person name="Veenhuis M."/>
            <person name="von Doehren H."/>
            <person name="Wagner C."/>
            <person name="Wortman J.R."/>
            <person name="Bovenberg R.A.L."/>
        </authorList>
    </citation>
    <scope>NUCLEOTIDE SEQUENCE [LARGE SCALE GENOMIC DNA]</scope>
    <source>
        <strain>ATCC 28089 / DSM 1075 / NRRL 1951 / Wisconsin 54-1255</strain>
    </source>
</reference>
<reference key="2">
    <citation type="journal article" date="2014" name="Chem. Sci.">
        <title>Oxidative dearomatisation: the key step of sorbicillinoid biosynthesis.</title>
        <authorList>
            <person name="Fahad A.A."/>
            <person name="Abood A."/>
            <person name="Fisch K.M."/>
            <person name="Osipow A."/>
            <person name="Davison J."/>
            <person name="Avramovic M."/>
            <person name="Butts C.P."/>
            <person name="Piel J."/>
            <person name="Simpson T.J."/>
            <person name="Cox R.J."/>
        </authorList>
    </citation>
    <scope>FUNCTION</scope>
</reference>
<reference key="3">
    <citation type="journal article" date="2016" name="Appl. Environ. Microbiol.">
        <title>Identification of a polyketide synthase involved in sorbicillin biosynthesis by Penicillium chrysogenum.</title>
        <authorList>
            <person name="Salo O."/>
            <person name="Guzman-Chavez F."/>
            <person name="Ries M.I."/>
            <person name="Lankhorst P.P."/>
            <person name="Bovenberg R.A."/>
            <person name="Vreeken R.J."/>
            <person name="Driessen A.J."/>
        </authorList>
    </citation>
    <scope>FUNCTION</scope>
    <scope>DISRUPTION PHENOTYPE</scope>
    <scope>DOMAIN</scope>
</reference>
<reference key="4">
    <citation type="journal article" date="2017" name="Microb. Biotechnol.">
        <title>Mechanism and regulation of sorbicillin biosynthesis by Penicillium chrysogenum.</title>
        <authorList>
            <person name="Guzman-Chavez F."/>
            <person name="Salo O."/>
            <person name="Nygaard Y."/>
            <person name="Lankhorst P.P."/>
            <person name="Bovenberg R.A.L."/>
            <person name="Driessen A.J.M."/>
        </authorList>
    </citation>
    <scope>FUNCTION</scope>
    <scope>DISRUPTION PHENOTYPE</scope>
</reference>
<comment type="function">
    <text evidence="1 6 7 8">Highly reducing polyketide synthase; part of the gene cluster that mediates the biosynthesis of sorbicillinoids, a diverse group of yellow secondary metabolites that restrict growth of competing pathogenic fungi but not of bacteria (PubMed:25580210, PubMed:27107123, PubMed:28618182). Sorbicillinoids biosynthesis requires the action of two PKSs (PubMed:25580210). SorA iteratively combines three acetyl units and the growing chain is modified by the ketoacyl reductase subunit, and optional by the enoyl reductase subunit in the second cycle (PubMed:25580210). The polyketide is then handed over to the PKS SorB, which adds three more acetyl units, and two methyl groups (PubMed:25580210). SorB releases an aldehyde, which undergoes spontaneous cyclization resulting in the formation of sorbicillin or 2',3'-dihydrosorbicillin (PubMed:25580210). The monooxygenase sorC oxidizes sorbicillin and 2',3'-dihydrosorbicillin to 2',3'-dihydrosorbicillinol and sorbicillinol, respectively (PubMed:28618182). The oxidoreductase sorD further converts sorbicillinol into oxosorbicillinol (PubMed:28618182). Sorbicillinol is the building block for the other sorbicillinoids such as disorbicillinol, bisvertinolon, and dihydrobisvertinolone (By similarity).</text>
</comment>
<comment type="pathway">
    <text evidence="6 7 8">Secondary metabolite biosynthesis.</text>
</comment>
<comment type="disruption phenotype">
    <text evidence="7 8">Impairs the production of sorbicillinol (PubMed:27107123, PubMed:28618182).</text>
</comment>
<proteinExistence type="inferred from homology"/>
<keyword id="KW-0012">Acyltransferase</keyword>
<keyword id="KW-0489">Methyltransferase</keyword>
<keyword id="KW-0511">Multifunctional enzyme</keyword>
<keyword id="KW-0521">NADP</keyword>
<keyword id="KW-0560">Oxidoreductase</keyword>
<keyword id="KW-0596">Phosphopantetheine</keyword>
<keyword id="KW-0597">Phosphoprotein</keyword>
<keyword id="KW-1185">Reference proteome</keyword>
<keyword id="KW-0808">Transferase</keyword>
<accession>B6HNK3</accession>
<name>SORA_PENRW</name>
<gene>
    <name evidence="9" type="primary">sorA</name>
    <name evidence="10" type="synonym">pks13</name>
    <name type="ORF">Pc21g05080</name>
</gene>
<protein>
    <recommendedName>
        <fullName evidence="9">Highly reducing polyketide synthase sorA</fullName>
        <shortName evidence="11">HR-PKS sorBA</shortName>
        <ecNumber evidence="6">2.3.1.-</ecNumber>
    </recommendedName>
    <alternativeName>
        <fullName evidence="9">Sorbicillinoid biosynthetic cluster protein A</fullName>
    </alternativeName>
</protein>
<sequence length="2581" mass="279283">MGSIDNTARGSSASEPIAIIGMSAKFAGDATNTDNLWRMLIEGRSGWSPFPDSRFRSEGVYHPNNERLNSTHVKGAHFLAEDVGLFDAAFFGYSGETAASMDPQYRLQLESVYEALENAGLPLTKIAGSNTSVFTGVFVHDYRDGFLRDADNLPRLMATGTGVPMMANRVSHFFDLRGASMTIETACSSGMVAVHQAVQSLRTGEADMSIVGGANLTLNPDMFKALGSAGFLSADGKSYAFDSRASGYGRGEGVGTLVVKRLSDALAAGDPIRAVIRESMLNQDGKTETITSPSLEAQEALVRGCYQKAGLDPRETQYFEAHGTGTQAGDTIEAQGIATVFASRQEPLLIGSIKTNVGHTEAASGLASIIKTALAMENGVIPPSINFEKPNPKISLDDWNLKLVREVETWPAGPIRRASINNFGYGGSNAHIILEDSASWVKAIGGQNGRTNGFADGHSNGPNANGHHSTLDPHVQESQVISKVLVLSGKDKQACEKMTANLADYLRQTQSTNSNPRELLDSLIYTLGQRRSRFPWVVAHPIPVTEGYETVVQTLQSPKFKPTRTSRRPRIGMVFTGQGAQWNAMGRELIEAYPVFKASLQEAAGYLEQFGAEWSLMDELMRDAEKSRINEVGLSTPICVAVQISLVRLLRAWGIVPVAVTSHSSGEIAAAYSAGAVSYKTAMAFSYYRAVLAADKSLRGPVKGGMIAVGLGLEETESYLRRLSSEGQAAIACINSPSSITVSGDLSAVVELEDLANADGVFARRLKVDTAWHSHHMTPIANVYCEALENTRAEKIDRDALTTVAFSSPVTGGRITDAQQIARPEHWVESLVQPVQFVAAFTDMVLGGSGSVGSNVDVVVEVGPHTALGGPIQEILGLPEFKDLNIPYYGTLVRKLDARDSMHALASSLLREGYPVNMGAVNFAHGRGQYVKVLTNLPSYPWNHQAKHWAEPRLNRAIRERSQPPHDLLGSIVEGSNPNAPSWRHILRMSESPWTRDHAIQSNVIYPAAGYICLAIEASRQLHVLNQTAGEIGGYRLRDVDFLQALMIPDSSDGIEIQTTIRPVSEKDIASQGWRHFEVWSVTTDNRWTQHAKGLVSVELGESSVRMSRPARKNITGYTRRILPADLFANLRNLGITHGPVFQNMDSIIQSGSEMRSVVSMTLPDVSVPNDLPRNHILHPVTLDSVITAPYSAVPGAAAREITAKVPRSVERFWVSSKISHDAGHSLEADTTLIRDDDQGMAADVLVSDHDTGNIMLEMNGFSYQSLGRSTSLQKSESWPNELCNKVVWSLDISTPLPATLAAVRNELACTVQSAECDTTKATLRACIYFMQLALVALDSHDIAEMEQHNASYYTWMKDTVELASSGKLFEGSAEWLYHSENERQLHIEQVQTRLDGEIVCRLGTQLVDILRGHTGALDLVMQDNLLSRFYSYAPRWKRAGTQIAGLLRHLSHKNPRARILEVGAATGAIALHALGALGTSDSGGPNASMYHFTDTSTALFETARESLQPWADLLSFDELDIEHDPASQGYTPGTYDIVIASNIRSISESTSQALSNISSLLKPGGTLLLVEPLKYEVDVHFVRRLLPGRWWDDSTELKANLCLDMPSWENQLLSAGFTGVELELLDREDPQEAALVTFMSTVQLPQPPKSNVDADQVVIVTSRNGCPPAAWVKGLKDAIAAYTVSEGKLGPIVQDLESLAATAASYADKICIFLGEVDEGILYNLNSTLLEGIRSMSTNSKGLIWVTRGGAVDCERPEMSLATGFIRSLRNEYVGRKLLTLDLDPKGTPWSDVSMAAIAKILGTVIGNSAGGSMVEKGAVELEYAERDGVILIPRIYHDVTRNRMLSPDASDAAMEKISIENFYQPTRPLCLKPDLLVFGDDDFSADYLEHLPPASLEVQPKAYGATLNSVGDHIAGFECAGIITQVGEEAAAQGYAVGDRVLSVLRHSSFPSRAVVDWKLTTRMPTDMTFQEGASLPLSFLSAYFALVEIARLQRSRSVLIHAGAGDVGQAAIMVAQHLGAEVYVTVGSPAERGLLILKYGLPADHIFSCTDLSLANAVVAATQGRGVDVVLNSLTGPLFQESLNLVAPLGHFVEIGRRNTQTNGYMHMRPFDRGISFATLDIPSLLEYRAMDVHRCLAELTRLIELKAVTPVHPITFHAIGEIAEASRLLKAGDQIGKVVLSVDEHSTVTAVPSKPAAKLSSEVSYLIVGGSGGLAQSVAHWMVNRGARNLVLLSRSAGTSEKTAAFAEDLRQAGCRRVLPISCDVANEESLGDAINQCAQEGLPPIRGIIHAAFVLRDAFVEKMTLDDWTYTIQSKVAGTWNLHNQFNLPGDLDFFVLFSSINGILGYASQSAYSAAGAYEDALAHWRVKHCGLPAVSIDLSVVNAVGYVAEANASETLRRSLLRAGRRVIDEDHVLGSLESAILSPFDPQFVVGGINSGPGPHWDLDGDLGRDMRVLPLKYRPPAVTGQSQDDDSSSDSLAAKMIACESQGDAVRVVGTAIAEMLAEMFLVPIEDVDLGQSPSQQGVDSLVAVEVRNMLFSQAGAEVSIFNIMQSPSLTQLAIDVVDRSAHVKLAG</sequence>